<dbReference type="EMBL" id="Y12491">
    <property type="protein sequence ID" value="CAA73096.1"/>
    <property type="molecule type" value="mRNA"/>
</dbReference>
<dbReference type="EMBL" id="Y12493">
    <property type="protein sequence ID" value="CAA73098.1"/>
    <property type="molecule type" value="Genomic_DNA"/>
</dbReference>
<dbReference type="EMBL" id="AF031473">
    <property type="protein sequence ID" value="AAB86637.1"/>
    <property type="molecule type" value="mRNA"/>
</dbReference>
<dbReference type="PIR" id="JC5768">
    <property type="entry name" value="H3NJ4F"/>
</dbReference>
<dbReference type="PDB" id="1KBS">
    <property type="method" value="NMR"/>
    <property type="chains" value="A=22-81"/>
</dbReference>
<dbReference type="PDB" id="1KBT">
    <property type="method" value="NMR"/>
    <property type="chains" value="A=22-81"/>
</dbReference>
<dbReference type="PDB" id="4OM5">
    <property type="method" value="X-ray"/>
    <property type="resolution" value="2.55 A"/>
    <property type="chains" value="A/B/C/D=22-81"/>
</dbReference>
<dbReference type="PDBsum" id="1KBS"/>
<dbReference type="PDBsum" id="1KBT"/>
<dbReference type="PDBsum" id="4OM5"/>
<dbReference type="SMR" id="P01443"/>
<dbReference type="EvolutionaryTrace" id="P01443"/>
<dbReference type="GO" id="GO:0005576">
    <property type="term" value="C:extracellular region"/>
    <property type="evidence" value="ECO:0007669"/>
    <property type="project" value="UniProtKB-SubCell"/>
</dbReference>
<dbReference type="GO" id="GO:0016020">
    <property type="term" value="C:membrane"/>
    <property type="evidence" value="ECO:0007669"/>
    <property type="project" value="UniProtKB-KW"/>
</dbReference>
<dbReference type="GO" id="GO:0044218">
    <property type="term" value="C:other organism cell membrane"/>
    <property type="evidence" value="ECO:0007669"/>
    <property type="project" value="UniProtKB-KW"/>
</dbReference>
<dbReference type="GO" id="GO:0004860">
    <property type="term" value="F:protein kinase inhibitor activity"/>
    <property type="evidence" value="ECO:0007669"/>
    <property type="project" value="UniProtKB-KW"/>
</dbReference>
<dbReference type="GO" id="GO:0090729">
    <property type="term" value="F:toxin activity"/>
    <property type="evidence" value="ECO:0007669"/>
    <property type="project" value="UniProtKB-KW"/>
</dbReference>
<dbReference type="GO" id="GO:0031640">
    <property type="term" value="P:killing of cells of another organism"/>
    <property type="evidence" value="ECO:0007669"/>
    <property type="project" value="UniProtKB-KW"/>
</dbReference>
<dbReference type="CDD" id="cd00206">
    <property type="entry name" value="TFP_snake_toxin"/>
    <property type="match status" value="1"/>
</dbReference>
<dbReference type="FunFam" id="2.10.60.10:FF:000024">
    <property type="entry name" value="Cytotoxin 1"/>
    <property type="match status" value="1"/>
</dbReference>
<dbReference type="Gene3D" id="2.10.60.10">
    <property type="entry name" value="CD59"/>
    <property type="match status" value="1"/>
</dbReference>
<dbReference type="InterPro" id="IPR003572">
    <property type="entry name" value="Cytotoxin_Cobra"/>
</dbReference>
<dbReference type="InterPro" id="IPR003571">
    <property type="entry name" value="Snake_3FTx"/>
</dbReference>
<dbReference type="InterPro" id="IPR045860">
    <property type="entry name" value="Snake_toxin-like_sf"/>
</dbReference>
<dbReference type="InterPro" id="IPR018354">
    <property type="entry name" value="Snake_toxin_con_site"/>
</dbReference>
<dbReference type="InterPro" id="IPR054131">
    <property type="entry name" value="Toxin_cobra-type"/>
</dbReference>
<dbReference type="Pfam" id="PF21947">
    <property type="entry name" value="Toxin_cobra-type"/>
    <property type="match status" value="1"/>
</dbReference>
<dbReference type="PRINTS" id="PR00282">
    <property type="entry name" value="CYTOTOXIN"/>
</dbReference>
<dbReference type="SUPFAM" id="SSF57302">
    <property type="entry name" value="Snake toxin-like"/>
    <property type="match status" value="1"/>
</dbReference>
<dbReference type="PROSITE" id="PS00272">
    <property type="entry name" value="SNAKE_TOXIN"/>
    <property type="match status" value="1"/>
</dbReference>
<protein>
    <recommendedName>
        <fullName>Cytotoxin 4</fullName>
        <shortName>CTX-4M</shortName>
        <shortName>CTX4</shortName>
    </recommendedName>
    <alternativeName>
        <fullName evidence="7 8">Cardiotoxin A4</fullName>
        <shortName evidence="7 8">CTX A4</shortName>
    </alternativeName>
    <alternativeName>
        <fullName evidence="9">Cardiotoxin analog IV</fullName>
        <shortName evidence="9">CTX IV</shortName>
    </alternativeName>
</protein>
<sequence length="81" mass="9084">MKTLLLTLVVVTIVCLDLGYTRKCNKLVPLFYKTCPAGKNLCYKMFMVSNLTVPVKRGCIDVCPKNSALVKYVCCNTDRCN</sequence>
<organism>
    <name type="scientific">Naja atra</name>
    <name type="common">Chinese cobra</name>
    <dbReference type="NCBI Taxonomy" id="8656"/>
    <lineage>
        <taxon>Eukaryota</taxon>
        <taxon>Metazoa</taxon>
        <taxon>Chordata</taxon>
        <taxon>Craniata</taxon>
        <taxon>Vertebrata</taxon>
        <taxon>Euteleostomi</taxon>
        <taxon>Lepidosauria</taxon>
        <taxon>Squamata</taxon>
        <taxon>Bifurcata</taxon>
        <taxon>Unidentata</taxon>
        <taxon>Episquamata</taxon>
        <taxon>Toxicofera</taxon>
        <taxon>Serpentes</taxon>
        <taxon>Colubroidea</taxon>
        <taxon>Elapidae</taxon>
        <taxon>Elapinae</taxon>
        <taxon>Naja</taxon>
    </lineage>
</organism>
<name>3SA4_NAJAT</name>
<evidence type="ECO:0000250" key="1">
    <source>
        <dbReference type="UniProtKB" id="P60301"/>
    </source>
</evidence>
<evidence type="ECO:0000269" key="2">
    <source>
    </source>
</evidence>
<evidence type="ECO:0000269" key="3">
    <source>
    </source>
</evidence>
<evidence type="ECO:0000269" key="4">
    <source>
    </source>
</evidence>
<evidence type="ECO:0000269" key="5">
    <source>
    </source>
</evidence>
<evidence type="ECO:0000269" key="6">
    <source>
    </source>
</evidence>
<evidence type="ECO:0000303" key="7">
    <source>
    </source>
</evidence>
<evidence type="ECO:0000303" key="8">
    <source>
    </source>
</evidence>
<evidence type="ECO:0000303" key="9">
    <source>
    </source>
</evidence>
<evidence type="ECO:0000305" key="10"/>
<evidence type="ECO:0000305" key="11">
    <source>
    </source>
</evidence>
<evidence type="ECO:0000312" key="12">
    <source>
        <dbReference type="PDB" id="1KBS"/>
    </source>
</evidence>
<evidence type="ECO:0000312" key="13">
    <source>
        <dbReference type="PDB" id="1KBT"/>
    </source>
</evidence>
<evidence type="ECO:0000312" key="14">
    <source>
        <dbReference type="PDB" id="4OM5"/>
    </source>
</evidence>
<evidence type="ECO:0007829" key="15">
    <source>
        <dbReference type="PDB" id="1KBS"/>
    </source>
</evidence>
<evidence type="ECO:0007829" key="16">
    <source>
        <dbReference type="PDB" id="4OM5"/>
    </source>
</evidence>
<accession>P01443</accession>
<proteinExistence type="evidence at protein level"/>
<comment type="function">
    <text evidence="2 3 5">Basic protein that bind to cell membrane and depolarizes cardiomyocytes. This cytotoxin also shows lytic activities, but 2-fold more important than that of CTX-A2. It binds to the integrin alpha-V/beta-3 with a moderate affinity. Inhibits protein kinase C. It may interact with sulfatides in the cell membrane, which induces pore formation and cell internalization and is responsible for cytotoxicity in cardiomyocytes. It may also target the mitochondrial membrane and induces mitochondrial swelling and fragmentation.</text>
</comment>
<comment type="subunit">
    <text evidence="1">Monomer in solution; Homodimer and oligomer in the presence of negatively charged lipids forming a pore with a size ranging between 20 and 30 Angstroms.</text>
</comment>
<comment type="subcellular location">
    <subcellularLocation>
        <location evidence="6">Secreted</location>
    </subcellularLocation>
    <subcellularLocation>
        <location evidence="1">Target cell membrane</location>
    </subcellularLocation>
</comment>
<comment type="tissue specificity">
    <text evidence="10">Expressed by the venom gland.</text>
</comment>
<comment type="toxic dose">
    <text evidence="6">LD(50) is 2.1 mg/kg by intravenous injection into mice.</text>
</comment>
<comment type="toxic dose">
    <text evidence="6">LD(50) is 48 mg/kg by subcutaneous injection into mice.</text>
</comment>
<comment type="miscellaneous">
    <text evidence="11">Is classified as a S-type cytotoxin, since a serine residue stands at position 49 (Ser-29 in standard classification).</text>
</comment>
<comment type="similarity">
    <text evidence="10">Belongs to the three-finger toxin family. Short-chain subfamily. Type IA cytotoxin sub-subfamily.</text>
</comment>
<feature type="signal peptide" evidence="3 4 6">
    <location>
        <begin position="1"/>
        <end position="21"/>
    </location>
</feature>
<feature type="chain" id="PRO_0000035375" description="Cytotoxin 4" evidence="3 4 6">
    <location>
        <begin position="22"/>
        <end position="81"/>
    </location>
</feature>
<feature type="disulfide bond" evidence="5 12 13 14">
    <location>
        <begin position="24"/>
        <end position="42"/>
    </location>
</feature>
<feature type="disulfide bond" evidence="5 12 13 14">
    <location>
        <begin position="35"/>
        <end position="59"/>
    </location>
</feature>
<feature type="disulfide bond" evidence="5 12 13 14">
    <location>
        <begin position="63"/>
        <end position="74"/>
    </location>
</feature>
<feature type="disulfide bond" evidence="5 12 13 14">
    <location>
        <begin position="75"/>
        <end position="80"/>
    </location>
</feature>
<feature type="strand" evidence="16">
    <location>
        <begin position="23"/>
        <end position="25"/>
    </location>
</feature>
<feature type="strand" evidence="15">
    <location>
        <begin position="27"/>
        <end position="30"/>
    </location>
</feature>
<feature type="strand" evidence="16">
    <location>
        <begin position="32"/>
        <end position="34"/>
    </location>
</feature>
<feature type="strand" evidence="16">
    <location>
        <begin position="41"/>
        <end position="47"/>
    </location>
</feature>
<feature type="strand" evidence="16">
    <location>
        <begin position="55"/>
        <end position="62"/>
    </location>
</feature>
<feature type="strand" evidence="16">
    <location>
        <begin position="69"/>
        <end position="75"/>
    </location>
</feature>
<feature type="turn" evidence="15">
    <location>
        <begin position="78"/>
        <end position="80"/>
    </location>
</feature>
<keyword id="KW-0002">3D-structure</keyword>
<keyword id="KW-0123">Cardiotoxin</keyword>
<keyword id="KW-0204">Cytolysis</keyword>
<keyword id="KW-0903">Direct protein sequencing</keyword>
<keyword id="KW-1015">Disulfide bond</keyword>
<keyword id="KW-0354">Hemolysis</keyword>
<keyword id="KW-0472">Membrane</keyword>
<keyword id="KW-0649">Protein kinase inhibitor</keyword>
<keyword id="KW-0964">Secreted</keyword>
<keyword id="KW-0732">Signal</keyword>
<keyword id="KW-1052">Target cell membrane</keyword>
<keyword id="KW-1053">Target membrane</keyword>
<keyword id="KW-0800">Toxin</keyword>
<reference key="1">
    <citation type="journal article" date="1997" name="Biochem. Biophys. Res. Commun.">
        <title>Genomic structures of cardiotoxin 4 and cobrotoxin from Naja naja atra (Taiwan cobra).</title>
        <authorList>
            <person name="Chang L.-S."/>
            <person name="Lin J."/>
            <person name="Chou Y.-C."/>
            <person name="Hong E."/>
        </authorList>
    </citation>
    <scope>NUCLEOTIDE SEQUENCE [GENOMIC DNA / MRNA]</scope>
    <source>
        <tissue>Liver</tissue>
        <tissue>Venom gland</tissue>
    </source>
</reference>
<reference key="2">
    <citation type="submission" date="1997-10" db="EMBL/GenBank/DDBJ databases">
        <authorList>
            <person name="Chu R.C."/>
            <person name="Yang C.-C."/>
        </authorList>
    </citation>
    <scope>NUCLEOTIDE SEQUENCE [MRNA]</scope>
    <source>
        <tissue>Venom gland</tissue>
    </source>
</reference>
<reference key="3">
    <citation type="journal article" date="1976" name="FEBS Lett.">
        <title>The amino acid sequence of cardiotoxin-analogue IV from the venom of Naja naja atra.</title>
        <authorList>
            <person name="Kaneda N."/>
            <person name="Sasaki T."/>
            <person name="Hayashi K."/>
        </authorList>
    </citation>
    <scope>PROTEIN SEQUENCE OF 22-81</scope>
    <scope>SUBCELLULAR LOCATION</scope>
    <scope>TOXIC DOSE</scope>
    <source>
        <tissue>Venom</tissue>
    </source>
</reference>
<reference key="4">
    <citation type="journal article" date="1977" name="Biochim. Biophys. Acta">
        <title>Primary structures of cardiotoxin analogues II and IV from the venom of Naja naja atra.</title>
        <authorList>
            <person name="Kaneda N."/>
            <person name="Sasaki T."/>
            <person name="Hayashi K."/>
        </authorList>
    </citation>
    <scope>PROTEIN SEQUENCE OF 22-81</scope>
    <scope>TOXIC DOSE</scope>
    <source>
        <tissue>Venom</tissue>
    </source>
</reference>
<reference key="5">
    <citation type="journal article" date="1993" name="Biochemistry">
        <title>Cobra venom cardiotoxin (cytotoxin) isoforms and neurotoxin: comparative potency of protein kinase C inhibition and cancer cell cytotoxicity and modes of enzyme inhibition.</title>
        <authorList>
            <person name="Chiou S.-H."/>
            <person name="Raynor R.L."/>
            <person name="Zheng B."/>
            <person name="Chambers T.C."/>
            <person name="Kuo J.F."/>
        </authorList>
    </citation>
    <scope>PROTEIN SEQUENCE OF 22-81</scope>
    <scope>FUNCTION AS AN INHIBITOR OF PKC</scope>
    <source>
        <tissue>Venom</tissue>
    </source>
</reference>
<reference key="6">
    <citation type="journal article" date="1994" name="J. Biol. Chem.">
        <title>Two distinct types of cardiotoxin as revealed by the structure and activity relationship of their interaction with zwitterionic phospholipid dispersions.</title>
        <authorList>
            <person name="Chien K.-Y."/>
            <person name="Chiang C.-M."/>
            <person name="Hseu Y.-C."/>
            <person name="Vyas A.A."/>
            <person name="Rule G.S."/>
            <person name="Wu W.-G."/>
        </authorList>
    </citation>
    <scope>FUNCTION</scope>
    <scope>APPARTENANCE TO S-TYPE CYTOTOXIN GROUP</scope>
</reference>
<reference key="7">
    <citation type="journal article" date="2006" name="J. Biol. Chem.">
        <title>Non-cytotoxic cobra cardiotoxin A5 binds to alpha(v)beta3 integrin and inhibits bone resorption. Identification of cardiotoxins as non-RGD integrin-binding proteins of the Ly-6 family.</title>
        <authorList>
            <person name="Wu P.-L."/>
            <person name="Lee S.-C."/>
            <person name="Chuang C.-C."/>
            <person name="Mori S."/>
            <person name="Akakura N."/>
            <person name="Wu W.-G."/>
            <person name="Takada Y."/>
        </authorList>
    </citation>
    <scope>FUNCTION</scope>
    <scope>BINDING TO INTEGRIN ALPHA-V/BETA-3</scope>
</reference>
<reference key="8">
    <citation type="journal article" date="1997" name="Biochemistry">
        <title>Comparison of the hemolytic activity and solution structures of two snake venom cardiotoxin analogues which only differ in their N-terminal amino acid.</title>
        <authorList>
            <person name="Jang J.-Y."/>
            <person name="Kumar T.K.S."/>
            <person name="Jayaraman G."/>
            <person name="Yang P.-W."/>
            <person name="Yu C."/>
        </authorList>
    </citation>
    <scope>STRUCTURE BY NMR</scope>
    <scope>FUNCTION</scope>
    <scope>DISULFIDE BONDS</scope>
</reference>